<name>LEXA_BARHE</name>
<gene>
    <name evidence="1" type="primary">lexA</name>
    <name type="ordered locus">BH08420</name>
</gene>
<organism>
    <name type="scientific">Bartonella henselae (strain ATCC 49882 / DSM 28221 / CCUG 30454 / Houston 1)</name>
    <name type="common">Rochalimaea henselae</name>
    <dbReference type="NCBI Taxonomy" id="283166"/>
    <lineage>
        <taxon>Bacteria</taxon>
        <taxon>Pseudomonadati</taxon>
        <taxon>Pseudomonadota</taxon>
        <taxon>Alphaproteobacteria</taxon>
        <taxon>Hyphomicrobiales</taxon>
        <taxon>Bartonellaceae</taxon>
        <taxon>Bartonella</taxon>
    </lineage>
</organism>
<comment type="function">
    <text evidence="1">Represses a number of genes involved in the response to DNA damage (SOS response), including recA and lexA. In the presence of single-stranded DNA, RecA interacts with LexA causing an autocatalytic cleavage which disrupts the DNA-binding part of LexA, leading to derepression of the SOS regulon and eventually DNA repair.</text>
</comment>
<comment type="catalytic activity">
    <reaction evidence="1">
        <text>Hydrolysis of Ala-|-Gly bond in repressor LexA.</text>
        <dbReference type="EC" id="3.4.21.88"/>
    </reaction>
</comment>
<comment type="subunit">
    <text evidence="1">Homodimer.</text>
</comment>
<comment type="similarity">
    <text evidence="1">Belongs to the peptidase S24 family.</text>
</comment>
<evidence type="ECO:0000255" key="1">
    <source>
        <dbReference type="HAMAP-Rule" id="MF_00015"/>
    </source>
</evidence>
<protein>
    <recommendedName>
        <fullName evidence="1">LexA repressor</fullName>
        <ecNumber evidence="1">3.4.21.88</ecNumber>
    </recommendedName>
</protein>
<sequence>MLTCKQYELLLFIHNHMKETGVPPSFDEMKTALELTSKSGIHRLITALEERGFIRRLPNRARAVEVIRLPEKITFNLSSARKISPSVIENNKRKISKNSDNFDLEEKKNIIIPIMGRIAAAVPISAIQQQINTLCLPQDMISLGEHYALEVKDDSMIEAGILDKDIIIVRRQNTATSGEIIIALIDKEEVTFKRYRRKGNSITLEAANPHYETRIYRPERVQIQGKLIGLIRKY</sequence>
<keyword id="KW-0068">Autocatalytic cleavage</keyword>
<keyword id="KW-0227">DNA damage</keyword>
<keyword id="KW-0234">DNA repair</keyword>
<keyword id="KW-0235">DNA replication</keyword>
<keyword id="KW-0238">DNA-binding</keyword>
<keyword id="KW-0378">Hydrolase</keyword>
<keyword id="KW-0678">Repressor</keyword>
<keyword id="KW-0742">SOS response</keyword>
<keyword id="KW-0804">Transcription</keyword>
<keyword id="KW-0805">Transcription regulation</keyword>
<reference key="1">
    <citation type="journal article" date="2004" name="Proc. Natl. Acad. Sci. U.S.A.">
        <title>The louse-borne human pathogen Bartonella quintana is a genomic derivative of the zoonotic agent Bartonella henselae.</title>
        <authorList>
            <person name="Alsmark U.C.M."/>
            <person name="Frank A.C."/>
            <person name="Karlberg E.O."/>
            <person name="Legault B.-A."/>
            <person name="Ardell D.H."/>
            <person name="Canbaeck B."/>
            <person name="Eriksson A.-S."/>
            <person name="Naeslund A.K."/>
            <person name="Handley S.A."/>
            <person name="Huvet M."/>
            <person name="La Scola B."/>
            <person name="Holmberg M."/>
            <person name="Andersson S.G.E."/>
        </authorList>
    </citation>
    <scope>NUCLEOTIDE SEQUENCE [LARGE SCALE GENOMIC DNA]</scope>
    <source>
        <strain>ATCC 49882 / DSM 28221 / CCUG 30454 / Houston 1</strain>
    </source>
</reference>
<accession>Q6G5D9</accession>
<dbReference type="EC" id="3.4.21.88" evidence="1"/>
<dbReference type="EMBL" id="BX897699">
    <property type="protein sequence ID" value="CAF27641.1"/>
    <property type="molecule type" value="Genomic_DNA"/>
</dbReference>
<dbReference type="RefSeq" id="WP_011180737.1">
    <property type="nucleotide sequence ID" value="NZ_LRIJ02000001.1"/>
</dbReference>
<dbReference type="SMR" id="Q6G5D9"/>
<dbReference type="MEROPS" id="S24.001"/>
<dbReference type="PaxDb" id="283166-BH08420"/>
<dbReference type="EnsemblBacteria" id="CAF27641">
    <property type="protein sequence ID" value="CAF27641"/>
    <property type="gene ID" value="BH08420"/>
</dbReference>
<dbReference type="GeneID" id="92985494"/>
<dbReference type="KEGG" id="bhe:BH08420"/>
<dbReference type="eggNOG" id="COG1974">
    <property type="taxonomic scope" value="Bacteria"/>
</dbReference>
<dbReference type="OrthoDB" id="9802364at2"/>
<dbReference type="Proteomes" id="UP000000421">
    <property type="component" value="Chromosome"/>
</dbReference>
<dbReference type="GO" id="GO:0003677">
    <property type="term" value="F:DNA binding"/>
    <property type="evidence" value="ECO:0007669"/>
    <property type="project" value="UniProtKB-UniRule"/>
</dbReference>
<dbReference type="GO" id="GO:0004252">
    <property type="term" value="F:serine-type endopeptidase activity"/>
    <property type="evidence" value="ECO:0007669"/>
    <property type="project" value="UniProtKB-UniRule"/>
</dbReference>
<dbReference type="GO" id="GO:0006281">
    <property type="term" value="P:DNA repair"/>
    <property type="evidence" value="ECO:0007669"/>
    <property type="project" value="UniProtKB-UniRule"/>
</dbReference>
<dbReference type="GO" id="GO:0006260">
    <property type="term" value="P:DNA replication"/>
    <property type="evidence" value="ECO:0007669"/>
    <property type="project" value="UniProtKB-UniRule"/>
</dbReference>
<dbReference type="GO" id="GO:0045892">
    <property type="term" value="P:negative regulation of DNA-templated transcription"/>
    <property type="evidence" value="ECO:0007669"/>
    <property type="project" value="UniProtKB-UniRule"/>
</dbReference>
<dbReference type="GO" id="GO:0006508">
    <property type="term" value="P:proteolysis"/>
    <property type="evidence" value="ECO:0007669"/>
    <property type="project" value="InterPro"/>
</dbReference>
<dbReference type="GO" id="GO:0009432">
    <property type="term" value="P:SOS response"/>
    <property type="evidence" value="ECO:0007669"/>
    <property type="project" value="UniProtKB-UniRule"/>
</dbReference>
<dbReference type="CDD" id="cd06529">
    <property type="entry name" value="S24_LexA-like"/>
    <property type="match status" value="1"/>
</dbReference>
<dbReference type="FunFam" id="2.10.109.10:FF:000001">
    <property type="entry name" value="LexA repressor"/>
    <property type="match status" value="1"/>
</dbReference>
<dbReference type="Gene3D" id="2.10.109.10">
    <property type="entry name" value="Umud Fragment, subunit A"/>
    <property type="match status" value="1"/>
</dbReference>
<dbReference type="Gene3D" id="1.10.10.10">
    <property type="entry name" value="Winged helix-like DNA-binding domain superfamily/Winged helix DNA-binding domain"/>
    <property type="match status" value="1"/>
</dbReference>
<dbReference type="HAMAP" id="MF_00015">
    <property type="entry name" value="LexA"/>
    <property type="match status" value="1"/>
</dbReference>
<dbReference type="InterPro" id="IPR006200">
    <property type="entry name" value="LexA"/>
</dbReference>
<dbReference type="InterPro" id="IPR039418">
    <property type="entry name" value="LexA-like"/>
</dbReference>
<dbReference type="InterPro" id="IPR036286">
    <property type="entry name" value="LexA/Signal_pep-like_sf"/>
</dbReference>
<dbReference type="InterPro" id="IPR006199">
    <property type="entry name" value="LexA_DNA-bd_dom"/>
</dbReference>
<dbReference type="InterPro" id="IPR050077">
    <property type="entry name" value="LexA_repressor"/>
</dbReference>
<dbReference type="InterPro" id="IPR006197">
    <property type="entry name" value="Peptidase_S24_LexA"/>
</dbReference>
<dbReference type="InterPro" id="IPR015927">
    <property type="entry name" value="Peptidase_S24_S26A/B/C"/>
</dbReference>
<dbReference type="InterPro" id="IPR036388">
    <property type="entry name" value="WH-like_DNA-bd_sf"/>
</dbReference>
<dbReference type="InterPro" id="IPR036390">
    <property type="entry name" value="WH_DNA-bd_sf"/>
</dbReference>
<dbReference type="NCBIfam" id="TIGR00498">
    <property type="entry name" value="lexA"/>
    <property type="match status" value="1"/>
</dbReference>
<dbReference type="PANTHER" id="PTHR33516">
    <property type="entry name" value="LEXA REPRESSOR"/>
    <property type="match status" value="1"/>
</dbReference>
<dbReference type="PANTHER" id="PTHR33516:SF2">
    <property type="entry name" value="LEXA REPRESSOR-RELATED"/>
    <property type="match status" value="1"/>
</dbReference>
<dbReference type="Pfam" id="PF01726">
    <property type="entry name" value="LexA_DNA_bind"/>
    <property type="match status" value="1"/>
</dbReference>
<dbReference type="Pfam" id="PF00717">
    <property type="entry name" value="Peptidase_S24"/>
    <property type="match status" value="1"/>
</dbReference>
<dbReference type="PRINTS" id="PR00726">
    <property type="entry name" value="LEXASERPTASE"/>
</dbReference>
<dbReference type="SUPFAM" id="SSF51306">
    <property type="entry name" value="LexA/Signal peptidase"/>
    <property type="match status" value="1"/>
</dbReference>
<dbReference type="SUPFAM" id="SSF46785">
    <property type="entry name" value="Winged helix' DNA-binding domain"/>
    <property type="match status" value="1"/>
</dbReference>
<proteinExistence type="inferred from homology"/>
<feature type="chain" id="PRO_0000170011" description="LexA repressor">
    <location>
        <begin position="1"/>
        <end position="234"/>
    </location>
</feature>
<feature type="DNA-binding region" description="H-T-H motif" evidence="1">
    <location>
        <begin position="26"/>
        <end position="46"/>
    </location>
</feature>
<feature type="active site" description="For autocatalytic cleavage activity" evidence="1">
    <location>
        <position position="155"/>
    </location>
</feature>
<feature type="active site" description="For autocatalytic cleavage activity" evidence="1">
    <location>
        <position position="193"/>
    </location>
</feature>